<feature type="chain" id="PRO_0000358387" description="NADH-quinone oxidoreductase subunit B 2">
    <location>
        <begin position="1"/>
        <end position="167"/>
    </location>
</feature>
<feature type="binding site" evidence="2">
    <location>
        <position position="39"/>
    </location>
    <ligand>
        <name>[4Fe-4S] cluster</name>
        <dbReference type="ChEBI" id="CHEBI:49883"/>
    </ligand>
</feature>
<feature type="binding site" evidence="2">
    <location>
        <position position="40"/>
    </location>
    <ligand>
        <name>[4Fe-4S] cluster</name>
        <dbReference type="ChEBI" id="CHEBI:49883"/>
    </ligand>
</feature>
<feature type="binding site" evidence="2">
    <location>
        <position position="104"/>
    </location>
    <ligand>
        <name>[4Fe-4S] cluster</name>
        <dbReference type="ChEBI" id="CHEBI:49883"/>
    </ligand>
</feature>
<feature type="binding site" evidence="2">
    <location>
        <position position="134"/>
    </location>
    <ligand>
        <name>[4Fe-4S] cluster</name>
        <dbReference type="ChEBI" id="CHEBI:49883"/>
    </ligand>
</feature>
<accession>A3NE04</accession>
<evidence type="ECO:0000250" key="1"/>
<evidence type="ECO:0000255" key="2">
    <source>
        <dbReference type="HAMAP-Rule" id="MF_01356"/>
    </source>
</evidence>
<evidence type="ECO:0000305" key="3"/>
<organism>
    <name type="scientific">Burkholderia pseudomallei (strain 668)</name>
    <dbReference type="NCBI Taxonomy" id="320373"/>
    <lineage>
        <taxon>Bacteria</taxon>
        <taxon>Pseudomonadati</taxon>
        <taxon>Pseudomonadota</taxon>
        <taxon>Betaproteobacteria</taxon>
        <taxon>Burkholderiales</taxon>
        <taxon>Burkholderiaceae</taxon>
        <taxon>Burkholderia</taxon>
        <taxon>pseudomallei group</taxon>
    </lineage>
</organism>
<keyword id="KW-0004">4Fe-4S</keyword>
<keyword id="KW-0997">Cell inner membrane</keyword>
<keyword id="KW-1003">Cell membrane</keyword>
<keyword id="KW-0408">Iron</keyword>
<keyword id="KW-0411">Iron-sulfur</keyword>
<keyword id="KW-0472">Membrane</keyword>
<keyword id="KW-0479">Metal-binding</keyword>
<keyword id="KW-0520">NAD</keyword>
<keyword id="KW-0874">Quinone</keyword>
<keyword id="KW-1278">Translocase</keyword>
<keyword id="KW-0813">Transport</keyword>
<keyword id="KW-0830">Ubiquinone</keyword>
<proteinExistence type="inferred from homology"/>
<sequence>MANHPLTLEKDGFIVTTLDAAMAAAQKNSLWYMTFGLACCAVEMMHAAGARYDMDRFGMIPRASPRQCDLMIVAGTLTNKMAPAMRRVYDQMAEPRYVVSMGSCANGGGYYHYSYSVVRGCDRIVPVDVYVPGCPPTAEALVYGLMQLQRKVAERSTHSRPKLFARP</sequence>
<comment type="function">
    <text evidence="1">NDH-1 shuttles electrons from NADH, via FMN and iron-sulfur (Fe-S) centers, to quinones in the respiratory chain. Couples the redox reaction to proton translocation (for every two electrons transferred, four hydrogen ions are translocated across the cytoplasmic membrane), and thus conserves the redox energy in a proton gradient (By similarity).</text>
</comment>
<comment type="catalytic activity">
    <reaction evidence="2">
        <text>a quinone + NADH + 5 H(+)(in) = a quinol + NAD(+) + 4 H(+)(out)</text>
        <dbReference type="Rhea" id="RHEA:57888"/>
        <dbReference type="ChEBI" id="CHEBI:15378"/>
        <dbReference type="ChEBI" id="CHEBI:24646"/>
        <dbReference type="ChEBI" id="CHEBI:57540"/>
        <dbReference type="ChEBI" id="CHEBI:57945"/>
        <dbReference type="ChEBI" id="CHEBI:132124"/>
    </reaction>
</comment>
<comment type="cofactor">
    <cofactor evidence="2">
        <name>[4Fe-4S] cluster</name>
        <dbReference type="ChEBI" id="CHEBI:49883"/>
    </cofactor>
    <text evidence="2">Binds 1 [4Fe-4S] cluster.</text>
</comment>
<comment type="subunit">
    <text evidence="2">NDH-1 is composed of 14 different subunits. Subunits NuoB, C, D, E, F, and G constitute the peripheral sector of the complex.</text>
</comment>
<comment type="subcellular location">
    <subcellularLocation>
        <location evidence="2">Cell inner membrane</location>
        <topology evidence="2">Peripheral membrane protein</topology>
        <orientation evidence="2">Cytoplasmic side</orientation>
    </subcellularLocation>
</comment>
<comment type="similarity">
    <text evidence="2">Belongs to the complex I 20 kDa subunit family.</text>
</comment>
<comment type="sequence caution" evidence="3">
    <conflict type="erroneous initiation">
        <sequence resource="EMBL-CDS" id="ABN85008"/>
    </conflict>
</comment>
<name>NUOB2_BURP6</name>
<dbReference type="EC" id="7.1.1.-" evidence="2"/>
<dbReference type="EMBL" id="CP000570">
    <property type="protein sequence ID" value="ABN85008.1"/>
    <property type="status" value="ALT_INIT"/>
    <property type="molecule type" value="Genomic_DNA"/>
</dbReference>
<dbReference type="RefSeq" id="WP_004186860.1">
    <property type="nucleotide sequence ID" value="NC_009074.1"/>
</dbReference>
<dbReference type="SMR" id="A3NE04"/>
<dbReference type="KEGG" id="bpd:BURPS668_3570"/>
<dbReference type="HOGENOM" id="CLU_055737_1_0_4"/>
<dbReference type="GO" id="GO:0005886">
    <property type="term" value="C:plasma membrane"/>
    <property type="evidence" value="ECO:0007669"/>
    <property type="project" value="UniProtKB-SubCell"/>
</dbReference>
<dbReference type="GO" id="GO:0045271">
    <property type="term" value="C:respiratory chain complex I"/>
    <property type="evidence" value="ECO:0007669"/>
    <property type="project" value="TreeGrafter"/>
</dbReference>
<dbReference type="GO" id="GO:0051539">
    <property type="term" value="F:4 iron, 4 sulfur cluster binding"/>
    <property type="evidence" value="ECO:0007669"/>
    <property type="project" value="UniProtKB-KW"/>
</dbReference>
<dbReference type="GO" id="GO:0005506">
    <property type="term" value="F:iron ion binding"/>
    <property type="evidence" value="ECO:0007669"/>
    <property type="project" value="UniProtKB-UniRule"/>
</dbReference>
<dbReference type="GO" id="GO:0008137">
    <property type="term" value="F:NADH dehydrogenase (ubiquinone) activity"/>
    <property type="evidence" value="ECO:0007669"/>
    <property type="project" value="InterPro"/>
</dbReference>
<dbReference type="GO" id="GO:0050136">
    <property type="term" value="F:NADH:ubiquinone reductase (non-electrogenic) activity"/>
    <property type="evidence" value="ECO:0007669"/>
    <property type="project" value="UniProtKB-UniRule"/>
</dbReference>
<dbReference type="GO" id="GO:0048038">
    <property type="term" value="F:quinone binding"/>
    <property type="evidence" value="ECO:0007669"/>
    <property type="project" value="UniProtKB-KW"/>
</dbReference>
<dbReference type="GO" id="GO:0009060">
    <property type="term" value="P:aerobic respiration"/>
    <property type="evidence" value="ECO:0007669"/>
    <property type="project" value="TreeGrafter"/>
</dbReference>
<dbReference type="GO" id="GO:0015990">
    <property type="term" value="P:electron transport coupled proton transport"/>
    <property type="evidence" value="ECO:0007669"/>
    <property type="project" value="TreeGrafter"/>
</dbReference>
<dbReference type="FunFam" id="3.40.50.12280:FF:000001">
    <property type="entry name" value="NADH-quinone oxidoreductase subunit B 2"/>
    <property type="match status" value="1"/>
</dbReference>
<dbReference type="Gene3D" id="3.40.50.12280">
    <property type="match status" value="1"/>
</dbReference>
<dbReference type="HAMAP" id="MF_01356">
    <property type="entry name" value="NDH1_NuoB"/>
    <property type="match status" value="1"/>
</dbReference>
<dbReference type="InterPro" id="IPR006137">
    <property type="entry name" value="NADH_UbQ_OxRdtase-like_20kDa"/>
</dbReference>
<dbReference type="InterPro" id="IPR006138">
    <property type="entry name" value="NADH_UQ_OxRdtase_20Kd_su"/>
</dbReference>
<dbReference type="NCBIfam" id="TIGR01957">
    <property type="entry name" value="nuoB_fam"/>
    <property type="match status" value="1"/>
</dbReference>
<dbReference type="NCBIfam" id="NF005012">
    <property type="entry name" value="PRK06411.1"/>
    <property type="match status" value="1"/>
</dbReference>
<dbReference type="PANTHER" id="PTHR11995">
    <property type="entry name" value="NADH DEHYDROGENASE"/>
    <property type="match status" value="1"/>
</dbReference>
<dbReference type="PANTHER" id="PTHR11995:SF14">
    <property type="entry name" value="NADH DEHYDROGENASE [UBIQUINONE] IRON-SULFUR PROTEIN 7, MITOCHONDRIAL"/>
    <property type="match status" value="1"/>
</dbReference>
<dbReference type="Pfam" id="PF01058">
    <property type="entry name" value="Oxidored_q6"/>
    <property type="match status" value="1"/>
</dbReference>
<dbReference type="SUPFAM" id="SSF56770">
    <property type="entry name" value="HydA/Nqo6-like"/>
    <property type="match status" value="1"/>
</dbReference>
<dbReference type="PROSITE" id="PS01150">
    <property type="entry name" value="COMPLEX1_20K"/>
    <property type="match status" value="1"/>
</dbReference>
<protein>
    <recommendedName>
        <fullName evidence="2">NADH-quinone oxidoreductase subunit B 2</fullName>
        <ecNumber evidence="2">7.1.1.-</ecNumber>
    </recommendedName>
    <alternativeName>
        <fullName evidence="2">NADH dehydrogenase I subunit B 2</fullName>
    </alternativeName>
    <alternativeName>
        <fullName evidence="2">NDH-1 subunit B 2</fullName>
    </alternativeName>
</protein>
<reference key="1">
    <citation type="journal article" date="2010" name="Genome Biol. Evol.">
        <title>Continuing evolution of Burkholderia mallei through genome reduction and large-scale rearrangements.</title>
        <authorList>
            <person name="Losada L."/>
            <person name="Ronning C.M."/>
            <person name="DeShazer D."/>
            <person name="Woods D."/>
            <person name="Fedorova N."/>
            <person name="Kim H.S."/>
            <person name="Shabalina S.A."/>
            <person name="Pearson T.R."/>
            <person name="Brinkac L."/>
            <person name="Tan P."/>
            <person name="Nandi T."/>
            <person name="Crabtree J."/>
            <person name="Badger J."/>
            <person name="Beckstrom-Sternberg S."/>
            <person name="Saqib M."/>
            <person name="Schutzer S.E."/>
            <person name="Keim P."/>
            <person name="Nierman W.C."/>
        </authorList>
    </citation>
    <scope>NUCLEOTIDE SEQUENCE [LARGE SCALE GENOMIC DNA]</scope>
    <source>
        <strain>668</strain>
    </source>
</reference>
<gene>
    <name evidence="2" type="primary">nuoB2</name>
    <name type="ordered locus">BURPS668_3570</name>
</gene>